<protein>
    <recommendedName>
        <fullName evidence="6">Methylsterol monooxygenase 1-1</fullName>
        <ecNumber evidence="3">1.14.18.10</ecNumber>
        <ecNumber evidence="3">1.14.18.9</ecNumber>
    </recommendedName>
    <alternativeName>
        <fullName evidence="6">Sterol 4-alpha-methyl-oxidase 1-1</fullName>
        <shortName evidence="6">AtSMO1-1</shortName>
    </alternativeName>
</protein>
<dbReference type="EC" id="1.14.18.10" evidence="3"/>
<dbReference type="EC" id="1.14.18.9" evidence="3"/>
<dbReference type="EMBL" id="AF039199">
    <property type="protein sequence ID" value="AAQ13424.1"/>
    <property type="molecule type" value="mRNA"/>
</dbReference>
<dbReference type="EMBL" id="AL049638">
    <property type="protein sequence ID" value="CAB40952.1"/>
    <property type="status" value="ALT_SEQ"/>
    <property type="molecule type" value="Genomic_DNA"/>
</dbReference>
<dbReference type="EMBL" id="AL161533">
    <property type="protein sequence ID" value="CAB78254.1"/>
    <property type="status" value="ALT_SEQ"/>
    <property type="molecule type" value="Genomic_DNA"/>
</dbReference>
<dbReference type="EMBL" id="CP002687">
    <property type="protein sequence ID" value="AEE83097.1"/>
    <property type="molecule type" value="Genomic_DNA"/>
</dbReference>
<dbReference type="EMBL" id="AY125499">
    <property type="protein sequence ID" value="AAM78091.1"/>
    <property type="molecule type" value="mRNA"/>
</dbReference>
<dbReference type="EMBL" id="BT000546">
    <property type="protein sequence ID" value="AAN18115.1"/>
    <property type="molecule type" value="mRNA"/>
</dbReference>
<dbReference type="EMBL" id="AY087412">
    <property type="protein sequence ID" value="AAM64961.1"/>
    <property type="molecule type" value="mRNA"/>
</dbReference>
<dbReference type="PIR" id="T06618">
    <property type="entry name" value="T06618"/>
</dbReference>
<dbReference type="RefSeq" id="NP_192948.1">
    <property type="nucleotide sequence ID" value="NM_117281.3"/>
</dbReference>
<dbReference type="FunCoup" id="Q8L7W5">
    <property type="interactions" value="1758"/>
</dbReference>
<dbReference type="STRING" id="3702.Q8L7W5"/>
<dbReference type="PaxDb" id="3702-AT4G12110.1"/>
<dbReference type="ProteomicsDB" id="228445"/>
<dbReference type="EnsemblPlants" id="AT4G12110.1">
    <property type="protein sequence ID" value="AT4G12110.1"/>
    <property type="gene ID" value="AT4G12110"/>
</dbReference>
<dbReference type="GeneID" id="826819"/>
<dbReference type="Gramene" id="AT4G12110.1">
    <property type="protein sequence ID" value="AT4G12110.1"/>
    <property type="gene ID" value="AT4G12110"/>
</dbReference>
<dbReference type="KEGG" id="ath:AT4G12110"/>
<dbReference type="Araport" id="AT4G12110"/>
<dbReference type="TAIR" id="AT4G12110">
    <property type="gene designation" value="SMO1-1"/>
</dbReference>
<dbReference type="eggNOG" id="KOG0873">
    <property type="taxonomic scope" value="Eukaryota"/>
</dbReference>
<dbReference type="HOGENOM" id="CLU_047036_5_3_1"/>
<dbReference type="InParanoid" id="Q8L7W5"/>
<dbReference type="OMA" id="VPWLYKT"/>
<dbReference type="BioCyc" id="ARA:AT4G12110-MONOMER"/>
<dbReference type="BioCyc" id="MetaCyc:AT4G12110-MONOMER"/>
<dbReference type="BRENDA" id="1.14.18.10">
    <property type="organism ID" value="399"/>
</dbReference>
<dbReference type="PRO" id="PR:Q8L7W5"/>
<dbReference type="Proteomes" id="UP000006548">
    <property type="component" value="Chromosome 4"/>
</dbReference>
<dbReference type="ExpressionAtlas" id="Q8L7W5">
    <property type="expression patterns" value="baseline and differential"/>
</dbReference>
<dbReference type="GO" id="GO:0005783">
    <property type="term" value="C:endoplasmic reticulum"/>
    <property type="evidence" value="ECO:0000314"/>
    <property type="project" value="UniProtKB"/>
</dbReference>
<dbReference type="GO" id="GO:0005789">
    <property type="term" value="C:endoplasmic reticulum membrane"/>
    <property type="evidence" value="ECO:0007669"/>
    <property type="project" value="UniProtKB-SubCell"/>
</dbReference>
<dbReference type="GO" id="GO:0016020">
    <property type="term" value="C:membrane"/>
    <property type="evidence" value="ECO:0000304"/>
    <property type="project" value="TAIR"/>
</dbReference>
<dbReference type="GO" id="GO:0000254">
    <property type="term" value="F:C-4 methylsterol oxidase activity"/>
    <property type="evidence" value="ECO:0000315"/>
    <property type="project" value="TAIR"/>
</dbReference>
<dbReference type="GO" id="GO:0005506">
    <property type="term" value="F:iron ion binding"/>
    <property type="evidence" value="ECO:0007669"/>
    <property type="project" value="InterPro"/>
</dbReference>
<dbReference type="GO" id="GO:0080064">
    <property type="term" value="P:4,4-dimethyl-9beta,19-cyclopropylsterol oxidation"/>
    <property type="evidence" value="ECO:0000303"/>
    <property type="project" value="TAIR"/>
</dbReference>
<dbReference type="GO" id="GO:0055089">
    <property type="term" value="P:fatty acid homeostasis"/>
    <property type="evidence" value="ECO:0000315"/>
    <property type="project" value="UniProtKB"/>
</dbReference>
<dbReference type="GO" id="GO:0016126">
    <property type="term" value="P:sterol biosynthetic process"/>
    <property type="evidence" value="ECO:0000315"/>
    <property type="project" value="TAIR"/>
</dbReference>
<dbReference type="GO" id="GO:0055092">
    <property type="term" value="P:sterol homeostasis"/>
    <property type="evidence" value="ECO:0000315"/>
    <property type="project" value="UniProtKB"/>
</dbReference>
<dbReference type="InterPro" id="IPR006694">
    <property type="entry name" value="Fatty_acid_hydroxylase"/>
</dbReference>
<dbReference type="InterPro" id="IPR050307">
    <property type="entry name" value="Sterol_Desaturase_Related"/>
</dbReference>
<dbReference type="PANTHER" id="PTHR11863">
    <property type="entry name" value="STEROL DESATURASE"/>
    <property type="match status" value="1"/>
</dbReference>
<dbReference type="Pfam" id="PF04116">
    <property type="entry name" value="FA_hydroxylase"/>
    <property type="match status" value="1"/>
</dbReference>
<sequence length="298" mass="34647">MIPYATVEEASIALGRNLTRLETLWFDYSATKSDYYLYCHNILFLFLVFSLVPLPLVFVELARSASGLFNRYKIQPKVNYSLSDMFKCYKDVMTMFILVVGPLQLVSYPSIQMIEIRSGLPLPTITEMLSQLVVYFLIEDYTNYWVHRFFHSKWGYDKIHRVHHEYTAPIGYAAPYAHWAEVLLLGIPTFMGPAIAPGHMITFWLWIALRQMEAIETHSGYDFPWSPTKYIPFYGGAEYHDYHHYVGGQSQSNFASVFTYCDYIYGTDKGYRFQKKLLEQIKESSKKSNKHNGGIKSD</sequence>
<proteinExistence type="evidence at protein level"/>
<comment type="function">
    <text evidence="3 4 5">Non-heme iron oxygenase involved in sterols biosynthesis by catalyzing the removal of the first methyl group at the C-4 position (PubMed:14653780). 4,4-dimethyl-9-beta,19-cyclopropylsterols such as 24-methylenecycloartanol are the preferred substrates (PubMed:14653780). Acts as a rate-limiting enzyme in the sterol pathway via interaction with ACBP1; sterols serve as lipid modulators for gene expression of homeodomain-leucine zipper IV transcription factors (PubMed:28500265). Together with SMO1-2, involved in the maintenance of sterol composition to balance auxin and cytokinin activities during embryogenesis (PubMed:31341004).</text>
</comment>
<comment type="catalytic activity">
    <reaction evidence="3">
        <text>4,4-dimethyl-5alpha-cholest-7-en-3beta-ol + 6 Fe(II)-[cytochrome b5] + 3 O2 + 5 H(+) = 4alpha-carboxy-4beta-methyl-5alpha-cholest-7-ene-3beta-ol + 6 Fe(III)-[cytochrome b5] + 4 H2O</text>
        <dbReference type="Rhea" id="RHEA:55220"/>
        <dbReference type="Rhea" id="RHEA-COMP:10438"/>
        <dbReference type="Rhea" id="RHEA-COMP:10439"/>
        <dbReference type="ChEBI" id="CHEBI:15377"/>
        <dbReference type="ChEBI" id="CHEBI:15378"/>
        <dbReference type="ChEBI" id="CHEBI:15379"/>
        <dbReference type="ChEBI" id="CHEBI:16455"/>
        <dbReference type="ChEBI" id="CHEBI:29033"/>
        <dbReference type="ChEBI" id="CHEBI:29034"/>
        <dbReference type="ChEBI" id="CHEBI:58387"/>
        <dbReference type="EC" id="1.14.18.9"/>
    </reaction>
</comment>
<comment type="catalytic activity">
    <reaction evidence="3">
        <text>24-methylenecycloartanol + 6 Fe(II)-[cytochrome b5] + 3 O2 + 5 H(+) = 4alpha-carboxy-4beta,14alpha-dimethyl-9beta,19-cyclo-5alpha-ergost-24(24(1))-en-3beta-ol + 6 Fe(III)-[cytochrome b5] + 4 H2O</text>
        <dbReference type="Rhea" id="RHEA:58832"/>
        <dbReference type="Rhea" id="RHEA-COMP:10438"/>
        <dbReference type="Rhea" id="RHEA-COMP:10439"/>
        <dbReference type="ChEBI" id="CHEBI:1307"/>
        <dbReference type="ChEBI" id="CHEBI:15377"/>
        <dbReference type="ChEBI" id="CHEBI:15378"/>
        <dbReference type="ChEBI" id="CHEBI:15379"/>
        <dbReference type="ChEBI" id="CHEBI:29033"/>
        <dbReference type="ChEBI" id="CHEBI:29034"/>
        <dbReference type="ChEBI" id="CHEBI:142916"/>
        <dbReference type="EC" id="1.14.18.10"/>
    </reaction>
</comment>
<comment type="cofactor">
    <cofactor evidence="1">
        <name>Fe cation</name>
        <dbReference type="ChEBI" id="CHEBI:24875"/>
    </cofactor>
</comment>
<comment type="subunit">
    <text evidence="4">Interacts with ACBP1.</text>
</comment>
<comment type="subcellular location">
    <subcellularLocation>
        <location evidence="4 5">Endoplasmic reticulum membrane</location>
        <topology evidence="2">Multi-pass membrane protein</topology>
    </subcellularLocation>
</comment>
<comment type="tissue specificity">
    <text evidence="4 5">Expressed in rosettes, stems, roots, floral buds, flowers and siliques.</text>
</comment>
<comment type="developmental stage">
    <text evidence="4 5">Strongly expressed in developing ovules (PubMed:28500265). During embryogenesis, expressed from the globular stage to the mature stage in both the embryo and endosperm (PubMed:31341004). From the torpedo to the mature embryo stages, strongly expressed in the provascular cells of the developing hypocotyl and in the shoot apical meristem (SAM) (PubMed:31341004). In leaves, strongly expressed in vascular tissues and stomata (PubMed:31341004). In roots, accumulates in the stele and at lateral root formation sites (PubMed:31341004). In flowers, observed in anthers and pistils (PubMed:31341004). In siliques, high levels in seedpods (PubMed:31341004).</text>
</comment>
<comment type="domain">
    <text evidence="1">The histidine box domains may contain the active site and/or be involved in metal ion binding.</text>
</comment>
<comment type="disruption phenotype">
    <text evidence="4 5">Proembryo abortion in the double mutant lacking both SMO1-1 and ACBP1 associated with altered fatty acids (FAs) and sterols profiles (PubMed:28500265). The double mutant smo1-1 smo1-3 shows no obvious phenotype (PubMed:31341004). The double mutant smo1-1 smo1-2, which accumulates dramatically 4,4-dimethylsterols, is embryo lethal, with embryo exhibiting severe defects, including no cotyledon or shoot apical meristem formation, abnormal division of suspensor cells, and twin embryos, and is associated with altered auxin and cytokinin homeostasis (PubMed:31341004).</text>
</comment>
<comment type="miscellaneous">
    <text evidence="7">Requires a membrane-bound cytochrome b5 as an obligatory electron carrier from NAD(P)H to SMO.</text>
</comment>
<comment type="similarity">
    <text evidence="7">Belongs to the sterol desaturase family.</text>
</comment>
<comment type="sequence caution" evidence="7">
    <conflict type="erroneous gene model prediction">
        <sequence resource="EMBL-CDS" id="CAB40952"/>
    </conflict>
</comment>
<comment type="sequence caution" evidence="7">
    <conflict type="erroneous gene model prediction">
        <sequence resource="EMBL-CDS" id="CAB78254"/>
    </conflict>
</comment>
<keyword id="KW-0256">Endoplasmic reticulum</keyword>
<keyword id="KW-0408">Iron</keyword>
<keyword id="KW-0444">Lipid biosynthesis</keyword>
<keyword id="KW-0443">Lipid metabolism</keyword>
<keyword id="KW-0472">Membrane</keyword>
<keyword id="KW-0503">Monooxygenase</keyword>
<keyword id="KW-0560">Oxidoreductase</keyword>
<keyword id="KW-1185">Reference proteome</keyword>
<keyword id="KW-0752">Steroid biosynthesis</keyword>
<keyword id="KW-0753">Steroid metabolism</keyword>
<keyword id="KW-0756">Sterol biosynthesis</keyword>
<keyword id="KW-1207">Sterol metabolism</keyword>
<keyword id="KW-0812">Transmembrane</keyword>
<keyword id="KW-1133">Transmembrane helix</keyword>
<organism>
    <name type="scientific">Arabidopsis thaliana</name>
    <name type="common">Mouse-ear cress</name>
    <dbReference type="NCBI Taxonomy" id="3702"/>
    <lineage>
        <taxon>Eukaryota</taxon>
        <taxon>Viridiplantae</taxon>
        <taxon>Streptophyta</taxon>
        <taxon>Embryophyta</taxon>
        <taxon>Tracheophyta</taxon>
        <taxon>Spermatophyta</taxon>
        <taxon>Magnoliopsida</taxon>
        <taxon>eudicotyledons</taxon>
        <taxon>Gunneridae</taxon>
        <taxon>Pentapetalae</taxon>
        <taxon>rosids</taxon>
        <taxon>malvids</taxon>
        <taxon>Brassicales</taxon>
        <taxon>Brassicaceae</taxon>
        <taxon>Camelineae</taxon>
        <taxon>Arabidopsis</taxon>
    </lineage>
</organism>
<evidence type="ECO:0000250" key="1">
    <source>
        <dbReference type="UniProtKB" id="P53045"/>
    </source>
</evidence>
<evidence type="ECO:0000255" key="2"/>
<evidence type="ECO:0000269" key="3">
    <source>
    </source>
</evidence>
<evidence type="ECO:0000269" key="4">
    <source>
    </source>
</evidence>
<evidence type="ECO:0000269" key="5">
    <source>
    </source>
</evidence>
<evidence type="ECO:0000303" key="6">
    <source>
    </source>
</evidence>
<evidence type="ECO:0000305" key="7"/>
<evidence type="ECO:0000312" key="8">
    <source>
        <dbReference type="Araport" id="AT4G12110"/>
    </source>
</evidence>
<evidence type="ECO:0000312" key="9">
    <source>
        <dbReference type="EMBL" id="CAB40952.1"/>
    </source>
</evidence>
<name>SMO11_ARATH</name>
<accession>Q8L7W5</accession>
<accession>Q71V05</accession>
<accession>Q8LB57</accession>
<accession>Q9SZ76</accession>
<gene>
    <name evidence="6" type="primary">SMO1-1</name>
    <name evidence="8" type="ordered locus">At4g12110</name>
    <name evidence="9" type="ORF">F16J13.180</name>
</gene>
<feature type="chain" id="PRO_0000413161" description="Methylsterol monooxygenase 1-1">
    <location>
        <begin position="1"/>
        <end position="298"/>
    </location>
</feature>
<feature type="transmembrane region" description="Helical" evidence="2">
    <location>
        <begin position="42"/>
        <end position="62"/>
    </location>
</feature>
<feature type="transmembrane region" description="Helical" evidence="2">
    <location>
        <begin position="96"/>
        <end position="116"/>
    </location>
</feature>
<feature type="transmembrane region" description="Helical" evidence="2">
    <location>
        <begin position="118"/>
        <end position="138"/>
    </location>
</feature>
<feature type="transmembrane region" description="Helical" evidence="2">
    <location>
        <begin position="189"/>
        <end position="209"/>
    </location>
</feature>
<feature type="domain" description="Fatty acid hydroxylase" evidence="2">
    <location>
        <begin position="132"/>
        <end position="267"/>
    </location>
</feature>
<feature type="short sequence motif" description="Histidine box-1" evidence="1">
    <location>
        <begin position="147"/>
        <end position="151"/>
    </location>
</feature>
<feature type="short sequence motif" description="Histidine box-2" evidence="1">
    <location>
        <begin position="160"/>
        <end position="164"/>
    </location>
</feature>
<feature type="short sequence motif" description="Histidine box-3" evidence="1">
    <location>
        <begin position="239"/>
        <end position="245"/>
    </location>
</feature>
<feature type="sequence conflict" description="In Ref. 5; AAM64961." evidence="7" ref="5">
    <original>V</original>
    <variation>I</variation>
    <location>
        <position position="59"/>
    </location>
</feature>
<feature type="sequence conflict" description="In Ref. 1; AAQ13424." evidence="7" ref="1">
    <original>D</original>
    <variation>E</variation>
    <location>
        <position position="140"/>
    </location>
</feature>
<reference key="1">
    <citation type="journal article" date="2004" name="Biochem. J.">
        <title>Plant sterol biosynthesis: identification of two distinct families of sterol 4alpha-methyl oxidases.</title>
        <authorList>
            <person name="Darnet S."/>
            <person name="Rahier A."/>
        </authorList>
    </citation>
    <scope>NUCLEOTIDE SEQUENCE [MRNA]</scope>
    <scope>FUNCTION</scope>
    <scope>CATALYTIC ACTIVITY</scope>
    <scope>GENE FAMILY</scope>
    <scope>NOMENCLATURE</scope>
    <source>
        <strain>cv. Columbia</strain>
        <tissue>Silique</tissue>
    </source>
</reference>
<reference key="2">
    <citation type="journal article" date="1999" name="Nature">
        <title>Sequence and analysis of chromosome 4 of the plant Arabidopsis thaliana.</title>
        <authorList>
            <person name="Mayer K.F.X."/>
            <person name="Schueller C."/>
            <person name="Wambutt R."/>
            <person name="Murphy G."/>
            <person name="Volckaert G."/>
            <person name="Pohl T."/>
            <person name="Duesterhoeft A."/>
            <person name="Stiekema W."/>
            <person name="Entian K.-D."/>
            <person name="Terryn N."/>
            <person name="Harris B."/>
            <person name="Ansorge W."/>
            <person name="Brandt P."/>
            <person name="Grivell L.A."/>
            <person name="Rieger M."/>
            <person name="Weichselgartner M."/>
            <person name="de Simone V."/>
            <person name="Obermaier B."/>
            <person name="Mache R."/>
            <person name="Mueller M."/>
            <person name="Kreis M."/>
            <person name="Delseny M."/>
            <person name="Puigdomenech P."/>
            <person name="Watson M."/>
            <person name="Schmidtheini T."/>
            <person name="Reichert B."/>
            <person name="Portetelle D."/>
            <person name="Perez-Alonso M."/>
            <person name="Boutry M."/>
            <person name="Bancroft I."/>
            <person name="Vos P."/>
            <person name="Hoheisel J."/>
            <person name="Zimmermann W."/>
            <person name="Wedler H."/>
            <person name="Ridley P."/>
            <person name="Langham S.-A."/>
            <person name="McCullagh B."/>
            <person name="Bilham L."/>
            <person name="Robben J."/>
            <person name="van der Schueren J."/>
            <person name="Grymonprez B."/>
            <person name="Chuang Y.-J."/>
            <person name="Vandenbussche F."/>
            <person name="Braeken M."/>
            <person name="Weltjens I."/>
            <person name="Voet M."/>
            <person name="Bastiaens I."/>
            <person name="Aert R."/>
            <person name="Defoor E."/>
            <person name="Weitzenegger T."/>
            <person name="Bothe G."/>
            <person name="Ramsperger U."/>
            <person name="Hilbert H."/>
            <person name="Braun M."/>
            <person name="Holzer E."/>
            <person name="Brandt A."/>
            <person name="Peters S."/>
            <person name="van Staveren M."/>
            <person name="Dirkse W."/>
            <person name="Mooijman P."/>
            <person name="Klein Lankhorst R."/>
            <person name="Rose M."/>
            <person name="Hauf J."/>
            <person name="Koetter P."/>
            <person name="Berneiser S."/>
            <person name="Hempel S."/>
            <person name="Feldpausch M."/>
            <person name="Lamberth S."/>
            <person name="Van den Daele H."/>
            <person name="De Keyser A."/>
            <person name="Buysshaert C."/>
            <person name="Gielen J."/>
            <person name="Villarroel R."/>
            <person name="De Clercq R."/>
            <person name="van Montagu M."/>
            <person name="Rogers J."/>
            <person name="Cronin A."/>
            <person name="Quail M.A."/>
            <person name="Bray-Allen S."/>
            <person name="Clark L."/>
            <person name="Doggett J."/>
            <person name="Hall S."/>
            <person name="Kay M."/>
            <person name="Lennard N."/>
            <person name="McLay K."/>
            <person name="Mayes R."/>
            <person name="Pettett A."/>
            <person name="Rajandream M.A."/>
            <person name="Lyne M."/>
            <person name="Benes V."/>
            <person name="Rechmann S."/>
            <person name="Borkova D."/>
            <person name="Bloecker H."/>
            <person name="Scharfe M."/>
            <person name="Grimm M."/>
            <person name="Loehnert T.-H."/>
            <person name="Dose S."/>
            <person name="de Haan M."/>
            <person name="Maarse A.C."/>
            <person name="Schaefer M."/>
            <person name="Mueller-Auer S."/>
            <person name="Gabel C."/>
            <person name="Fuchs M."/>
            <person name="Fartmann B."/>
            <person name="Granderath K."/>
            <person name="Dauner D."/>
            <person name="Herzl A."/>
            <person name="Neumann S."/>
            <person name="Argiriou A."/>
            <person name="Vitale D."/>
            <person name="Liguori R."/>
            <person name="Piravandi E."/>
            <person name="Massenet O."/>
            <person name="Quigley F."/>
            <person name="Clabauld G."/>
            <person name="Muendlein A."/>
            <person name="Felber R."/>
            <person name="Schnabl S."/>
            <person name="Hiller R."/>
            <person name="Schmidt W."/>
            <person name="Lecharny A."/>
            <person name="Aubourg S."/>
            <person name="Chefdor F."/>
            <person name="Cooke R."/>
            <person name="Berger C."/>
            <person name="Monfort A."/>
            <person name="Casacuberta E."/>
            <person name="Gibbons T."/>
            <person name="Weber N."/>
            <person name="Vandenbol M."/>
            <person name="Bargues M."/>
            <person name="Terol J."/>
            <person name="Torres A."/>
            <person name="Perez-Perez A."/>
            <person name="Purnelle B."/>
            <person name="Bent E."/>
            <person name="Johnson S."/>
            <person name="Tacon D."/>
            <person name="Jesse T."/>
            <person name="Heijnen L."/>
            <person name="Schwarz S."/>
            <person name="Scholler P."/>
            <person name="Heber S."/>
            <person name="Francs P."/>
            <person name="Bielke C."/>
            <person name="Frishman D."/>
            <person name="Haase D."/>
            <person name="Lemcke K."/>
            <person name="Mewes H.-W."/>
            <person name="Stocker S."/>
            <person name="Zaccaria P."/>
            <person name="Bevan M."/>
            <person name="Wilson R.K."/>
            <person name="de la Bastide M."/>
            <person name="Habermann K."/>
            <person name="Parnell L."/>
            <person name="Dedhia N."/>
            <person name="Gnoj L."/>
            <person name="Schutz K."/>
            <person name="Huang E."/>
            <person name="Spiegel L."/>
            <person name="Sekhon M."/>
            <person name="Murray J."/>
            <person name="Sheet P."/>
            <person name="Cordes M."/>
            <person name="Abu-Threideh J."/>
            <person name="Stoneking T."/>
            <person name="Kalicki J."/>
            <person name="Graves T."/>
            <person name="Harmon G."/>
            <person name="Edwards J."/>
            <person name="Latreille P."/>
            <person name="Courtney L."/>
            <person name="Cloud J."/>
            <person name="Abbott A."/>
            <person name="Scott K."/>
            <person name="Johnson D."/>
            <person name="Minx P."/>
            <person name="Bentley D."/>
            <person name="Fulton B."/>
            <person name="Miller N."/>
            <person name="Greco T."/>
            <person name="Kemp K."/>
            <person name="Kramer J."/>
            <person name="Fulton L."/>
            <person name="Mardis E."/>
            <person name="Dante M."/>
            <person name="Pepin K."/>
            <person name="Hillier L.W."/>
            <person name="Nelson J."/>
            <person name="Spieth J."/>
            <person name="Ryan E."/>
            <person name="Andrews S."/>
            <person name="Geisel C."/>
            <person name="Layman D."/>
            <person name="Du H."/>
            <person name="Ali J."/>
            <person name="Berghoff A."/>
            <person name="Jones K."/>
            <person name="Drone K."/>
            <person name="Cotton M."/>
            <person name="Joshu C."/>
            <person name="Antonoiu B."/>
            <person name="Zidanic M."/>
            <person name="Strong C."/>
            <person name="Sun H."/>
            <person name="Lamar B."/>
            <person name="Yordan C."/>
            <person name="Ma P."/>
            <person name="Zhong J."/>
            <person name="Preston R."/>
            <person name="Vil D."/>
            <person name="Shekher M."/>
            <person name="Matero A."/>
            <person name="Shah R."/>
            <person name="Swaby I.K."/>
            <person name="O'Shaughnessy A."/>
            <person name="Rodriguez M."/>
            <person name="Hoffman J."/>
            <person name="Till S."/>
            <person name="Granat S."/>
            <person name="Shohdy N."/>
            <person name="Hasegawa A."/>
            <person name="Hameed A."/>
            <person name="Lodhi M."/>
            <person name="Johnson A."/>
            <person name="Chen E."/>
            <person name="Marra M.A."/>
            <person name="Martienssen R."/>
            <person name="McCombie W.R."/>
        </authorList>
    </citation>
    <scope>NUCLEOTIDE SEQUENCE [LARGE SCALE GENOMIC DNA]</scope>
    <source>
        <strain>cv. Columbia</strain>
    </source>
</reference>
<reference key="3">
    <citation type="journal article" date="2017" name="Plant J.">
        <title>Araport11: a complete reannotation of the Arabidopsis thaliana reference genome.</title>
        <authorList>
            <person name="Cheng C.Y."/>
            <person name="Krishnakumar V."/>
            <person name="Chan A.P."/>
            <person name="Thibaud-Nissen F."/>
            <person name="Schobel S."/>
            <person name="Town C.D."/>
        </authorList>
    </citation>
    <scope>GENOME REANNOTATION</scope>
    <source>
        <strain>cv. Columbia</strain>
    </source>
</reference>
<reference key="4">
    <citation type="journal article" date="2003" name="Science">
        <title>Empirical analysis of transcriptional activity in the Arabidopsis genome.</title>
        <authorList>
            <person name="Yamada K."/>
            <person name="Lim J."/>
            <person name="Dale J.M."/>
            <person name="Chen H."/>
            <person name="Shinn P."/>
            <person name="Palm C.J."/>
            <person name="Southwick A.M."/>
            <person name="Wu H.C."/>
            <person name="Kim C.J."/>
            <person name="Nguyen M."/>
            <person name="Pham P.K."/>
            <person name="Cheuk R.F."/>
            <person name="Karlin-Newmann G."/>
            <person name="Liu S.X."/>
            <person name="Lam B."/>
            <person name="Sakano H."/>
            <person name="Wu T."/>
            <person name="Yu G."/>
            <person name="Miranda M."/>
            <person name="Quach H.L."/>
            <person name="Tripp M."/>
            <person name="Chang C.H."/>
            <person name="Lee J.M."/>
            <person name="Toriumi M.J."/>
            <person name="Chan M.M."/>
            <person name="Tang C.C."/>
            <person name="Onodera C.S."/>
            <person name="Deng J.M."/>
            <person name="Akiyama K."/>
            <person name="Ansari Y."/>
            <person name="Arakawa T."/>
            <person name="Banh J."/>
            <person name="Banno F."/>
            <person name="Bowser L."/>
            <person name="Brooks S.Y."/>
            <person name="Carninci P."/>
            <person name="Chao Q."/>
            <person name="Choy N."/>
            <person name="Enju A."/>
            <person name="Goldsmith A.D."/>
            <person name="Gurjal M."/>
            <person name="Hansen N.F."/>
            <person name="Hayashizaki Y."/>
            <person name="Johnson-Hopson C."/>
            <person name="Hsuan V.W."/>
            <person name="Iida K."/>
            <person name="Karnes M."/>
            <person name="Khan S."/>
            <person name="Koesema E."/>
            <person name="Ishida J."/>
            <person name="Jiang P.X."/>
            <person name="Jones T."/>
            <person name="Kawai J."/>
            <person name="Kamiya A."/>
            <person name="Meyers C."/>
            <person name="Nakajima M."/>
            <person name="Narusaka M."/>
            <person name="Seki M."/>
            <person name="Sakurai T."/>
            <person name="Satou M."/>
            <person name="Tamse R."/>
            <person name="Vaysberg M."/>
            <person name="Wallender E.K."/>
            <person name="Wong C."/>
            <person name="Yamamura Y."/>
            <person name="Yuan S."/>
            <person name="Shinozaki K."/>
            <person name="Davis R.W."/>
            <person name="Theologis A."/>
            <person name="Ecker J.R."/>
        </authorList>
    </citation>
    <scope>NUCLEOTIDE SEQUENCE [LARGE SCALE MRNA]</scope>
    <source>
        <strain>cv. Columbia</strain>
    </source>
</reference>
<reference key="5">
    <citation type="submission" date="2002-03" db="EMBL/GenBank/DDBJ databases">
        <title>Full-length cDNA from Arabidopsis thaliana.</title>
        <authorList>
            <person name="Brover V.V."/>
            <person name="Troukhan M.E."/>
            <person name="Alexandrov N.A."/>
            <person name="Lu Y.-P."/>
            <person name="Flavell R.B."/>
            <person name="Feldmann K.A."/>
        </authorList>
    </citation>
    <scope>NUCLEOTIDE SEQUENCE [LARGE SCALE MRNA]</scope>
</reference>
<reference key="6">
    <citation type="journal article" date="2017" name="Plant Physiol.">
        <title>Acyl-CoA-binding protein ACBP1 modulates sterol synthesis during embryogenesis.</title>
        <authorList>
            <person name="Lung S.-C."/>
            <person name="Liao P."/>
            <person name="Yeung E.C."/>
            <person name="Hsiao A.-S."/>
            <person name="Xue Y."/>
            <person name="Chye M.-L."/>
        </authorList>
    </citation>
    <scope>FUNCTION</scope>
    <scope>DISRUPTION PHENOTYPE</scope>
    <scope>INTERACTION WITH ACBP1</scope>
    <scope>DEVELOPMENTAL STAGE</scope>
    <scope>SUBCELLULAR LOCATION</scope>
    <scope>TISSUE SPECIFICITY</scope>
    <source>
        <strain>cv. Columbia</strain>
    </source>
</reference>
<reference key="7">
    <citation type="journal article" date="2019" name="Plant Physiol.">
        <title>The SMO1 family of sterol 4alpha-methyl oxidases is essential for auxin- and cytokinin-regulated embryogenesis.</title>
        <authorList>
            <person name="Song J."/>
            <person name="Sun S."/>
            <person name="Ren H."/>
            <person name="Grison M."/>
            <person name="Boutte Y."/>
            <person name="Bai W."/>
            <person name="Men S."/>
        </authorList>
    </citation>
    <scope>FUNCTION</scope>
    <scope>DISRUPTION PHENOTYPE</scope>
    <scope>SUBCELLULAR LOCATION</scope>
    <scope>TISSUE SPECIFICITY</scope>
    <scope>DEVELOPMENTAL STAGE</scope>
    <source>
        <strain>cv. Columbia</strain>
        <strain>cv. Landsberg erecta</strain>
        <strain>cv. Wassilewskija</strain>
    </source>
</reference>